<keyword id="KW-0067">ATP-binding</keyword>
<keyword id="KW-0997">Cell inner membrane</keyword>
<keyword id="KW-1003">Cell membrane</keyword>
<keyword id="KW-0472">Membrane</keyword>
<keyword id="KW-0479">Metal-binding</keyword>
<keyword id="KW-0547">Nucleotide-binding</keyword>
<keyword id="KW-0653">Protein transport</keyword>
<keyword id="KW-1278">Translocase</keyword>
<keyword id="KW-0813">Transport</keyword>
<keyword id="KW-0862">Zinc</keyword>
<feature type="chain" id="PRO_0000207288" description="Type II secretion system protein E">
    <location>
        <begin position="1"/>
        <end position="497"/>
    </location>
</feature>
<feature type="binding site" evidence="3">
    <location>
        <begin position="255"/>
        <end position="262"/>
    </location>
    <ligand>
        <name>ATP</name>
        <dbReference type="ChEBI" id="CHEBI:30616"/>
    </ligand>
</feature>
<feature type="binding site" evidence="1">
    <location>
        <position position="388"/>
    </location>
    <ligand>
        <name>Zn(2+)</name>
        <dbReference type="ChEBI" id="CHEBI:29105"/>
    </ligand>
</feature>
<feature type="binding site" evidence="1">
    <location>
        <position position="391"/>
    </location>
    <ligand>
        <name>Zn(2+)</name>
        <dbReference type="ChEBI" id="CHEBI:29105"/>
    </ligand>
</feature>
<feature type="binding site" evidence="1">
    <location>
        <position position="419"/>
    </location>
    <ligand>
        <name>Zn(2+)</name>
        <dbReference type="ChEBI" id="CHEBI:29105"/>
    </ligand>
</feature>
<feature type="binding site" evidence="1">
    <location>
        <position position="422"/>
    </location>
    <ligand>
        <name>Zn(2+)</name>
        <dbReference type="ChEBI" id="CHEBI:29105"/>
    </ligand>
</feature>
<proteinExistence type="inferred from homology"/>
<name>GSPE_KLEPN</name>
<dbReference type="EC" id="7.4.2.8" evidence="1"/>
<dbReference type="EMBL" id="M32613">
    <property type="protein sequence ID" value="AAA25127.1"/>
    <property type="molecule type" value="Genomic_DNA"/>
</dbReference>
<dbReference type="PIR" id="S20034">
    <property type="entry name" value="C34469"/>
</dbReference>
<dbReference type="SMR" id="P15645"/>
<dbReference type="TCDB" id="3.A.15.1.1">
    <property type="family name" value="the outer membrane protein secreting main terminal branch (mtb) family"/>
</dbReference>
<dbReference type="GO" id="GO:0005886">
    <property type="term" value="C:plasma membrane"/>
    <property type="evidence" value="ECO:0007669"/>
    <property type="project" value="UniProtKB-SubCell"/>
</dbReference>
<dbReference type="GO" id="GO:0015627">
    <property type="term" value="C:type II protein secretion system complex"/>
    <property type="evidence" value="ECO:0007669"/>
    <property type="project" value="InterPro"/>
</dbReference>
<dbReference type="GO" id="GO:0005524">
    <property type="term" value="F:ATP binding"/>
    <property type="evidence" value="ECO:0007669"/>
    <property type="project" value="UniProtKB-KW"/>
</dbReference>
<dbReference type="GO" id="GO:0016887">
    <property type="term" value="F:ATP hydrolysis activity"/>
    <property type="evidence" value="ECO:0007669"/>
    <property type="project" value="InterPro"/>
</dbReference>
<dbReference type="GO" id="GO:0046872">
    <property type="term" value="F:metal ion binding"/>
    <property type="evidence" value="ECO:0007669"/>
    <property type="project" value="UniProtKB-KW"/>
</dbReference>
<dbReference type="GO" id="GO:0008564">
    <property type="term" value="F:protein-exporting ATPase activity"/>
    <property type="evidence" value="ECO:0007669"/>
    <property type="project" value="UniProtKB-EC"/>
</dbReference>
<dbReference type="GO" id="GO:0015628">
    <property type="term" value="P:protein secretion by the type II secretion system"/>
    <property type="evidence" value="ECO:0007669"/>
    <property type="project" value="InterPro"/>
</dbReference>
<dbReference type="CDD" id="cd01129">
    <property type="entry name" value="PulE-GspE-like"/>
    <property type="match status" value="1"/>
</dbReference>
<dbReference type="FunFam" id="3.30.450.90:FF:000001">
    <property type="entry name" value="Type II secretion system ATPase GspE"/>
    <property type="match status" value="1"/>
</dbReference>
<dbReference type="FunFam" id="3.40.50.300:FF:000398">
    <property type="entry name" value="Type IV pilus assembly ATPase PilB"/>
    <property type="match status" value="1"/>
</dbReference>
<dbReference type="Gene3D" id="3.30.450.90">
    <property type="match status" value="1"/>
</dbReference>
<dbReference type="Gene3D" id="3.40.50.300">
    <property type="entry name" value="P-loop containing nucleotide triphosphate hydrolases"/>
    <property type="match status" value="1"/>
</dbReference>
<dbReference type="Gene3D" id="3.30.300.160">
    <property type="entry name" value="Type II secretion system, protein E, N-terminal domain"/>
    <property type="match status" value="1"/>
</dbReference>
<dbReference type="InterPro" id="IPR003593">
    <property type="entry name" value="AAA+_ATPase"/>
</dbReference>
<dbReference type="InterPro" id="IPR054757">
    <property type="entry name" value="GSPE_N1E"/>
</dbReference>
<dbReference type="InterPro" id="IPR027417">
    <property type="entry name" value="P-loop_NTPase"/>
</dbReference>
<dbReference type="InterPro" id="IPR001482">
    <property type="entry name" value="T2SS/T4SS_dom"/>
</dbReference>
<dbReference type="InterPro" id="IPR037257">
    <property type="entry name" value="T2SS_E_N_sf"/>
</dbReference>
<dbReference type="InterPro" id="IPR013369">
    <property type="entry name" value="T2SS_GspE"/>
</dbReference>
<dbReference type="NCBIfam" id="TIGR02533">
    <property type="entry name" value="type_II_gspE"/>
    <property type="match status" value="1"/>
</dbReference>
<dbReference type="PANTHER" id="PTHR30258:SF27">
    <property type="entry name" value="BACTERIOPHAGE ADSORPTION PROTEIN B-RELATED"/>
    <property type="match status" value="1"/>
</dbReference>
<dbReference type="PANTHER" id="PTHR30258">
    <property type="entry name" value="TYPE II SECRETION SYSTEM PROTEIN GSPE-RELATED"/>
    <property type="match status" value="1"/>
</dbReference>
<dbReference type="Pfam" id="PF22341">
    <property type="entry name" value="GSPE_N1E"/>
    <property type="match status" value="1"/>
</dbReference>
<dbReference type="Pfam" id="PF00437">
    <property type="entry name" value="T2SSE"/>
    <property type="match status" value="1"/>
</dbReference>
<dbReference type="SMART" id="SM00382">
    <property type="entry name" value="AAA"/>
    <property type="match status" value="1"/>
</dbReference>
<dbReference type="SUPFAM" id="SSF160246">
    <property type="entry name" value="EspE N-terminal domain-like"/>
    <property type="match status" value="1"/>
</dbReference>
<dbReference type="SUPFAM" id="SSF52540">
    <property type="entry name" value="P-loop containing nucleoside triphosphate hydrolases"/>
    <property type="match status" value="1"/>
</dbReference>
<dbReference type="PROSITE" id="PS00662">
    <property type="entry name" value="T2SP_E"/>
    <property type="match status" value="1"/>
</dbReference>
<comment type="function">
    <text evidence="2">ATPase component of the type II secretion system required for the energy-dependent secretion of extracellular factors such as proteases and toxins from the periplasm. Acts as a molecular motor to provide the energy that is required for assembly of the pseudopilus and the extrusion of substrates generated in the cytoplasm.</text>
</comment>
<comment type="catalytic activity">
    <reaction evidence="1">
        <text>ATP + H2O + cellular proteinSide 1 = ADP + phosphate + cellular proteinSide 2.</text>
        <dbReference type="EC" id="7.4.2.8"/>
    </reaction>
</comment>
<comment type="cofactor">
    <cofactor evidence="1">
        <name>Zn(2+)</name>
        <dbReference type="ChEBI" id="CHEBI:29105"/>
    </cofactor>
</comment>
<comment type="subunit">
    <text evidence="1 2">Forms homooligomers; most probably hexamers (By similarity). Interacts with PulL/GspL (By similarity).</text>
</comment>
<comment type="subcellular location">
    <subcellularLocation>
        <location evidence="2">Cell inner membrane</location>
    </subcellularLocation>
    <text evidence="2">Membrane association is not an intrinsic property but requires the PulL/GspL gene product.</text>
</comment>
<comment type="similarity">
    <text evidence="4">Belongs to the GSP E family.</text>
</comment>
<organism>
    <name type="scientific">Klebsiella pneumoniae</name>
    <dbReference type="NCBI Taxonomy" id="573"/>
    <lineage>
        <taxon>Bacteria</taxon>
        <taxon>Pseudomonadati</taxon>
        <taxon>Pseudomonadota</taxon>
        <taxon>Gammaproteobacteria</taxon>
        <taxon>Enterobacterales</taxon>
        <taxon>Enterobacteriaceae</taxon>
        <taxon>Klebsiella/Raoultella group</taxon>
        <taxon>Klebsiella</taxon>
        <taxon>Klebsiella pneumoniae complex</taxon>
    </lineage>
</organism>
<protein>
    <recommendedName>
        <fullName>Type II secretion system protein E</fullName>
        <shortName>T2SS protein E</shortName>
        <ecNumber evidence="1">7.4.2.8</ecNumber>
    </recommendedName>
    <alternativeName>
        <fullName>General secretion pathway protein E</fullName>
    </alternativeName>
    <alternativeName>
        <fullName>Pullulanase secretion protein PulE</fullName>
    </alternativeName>
    <alternativeName>
        <fullName>Type II traffic warden ATPase</fullName>
    </alternativeName>
</protein>
<reference key="1">
    <citation type="journal article" date="1992" name="Mol. Microbiol.">
        <title>Pullulanase secretion in Escherichia coli K-12 requires a cytoplasmic protein and a putative polytopic cytoplasmic membrane protein.</title>
        <authorList>
            <person name="Possot O."/>
            <person name="d'Enfert C."/>
            <person name="Reyss I."/>
            <person name="Pugsley A.P."/>
        </authorList>
    </citation>
    <scope>NUCLEOTIDE SEQUENCE [GENOMIC DNA]</scope>
</reference>
<reference key="2">
    <citation type="journal article" date="1989" name="J. Biol. Chem.">
        <title>Protein secretion by Gram-negative bacteria. Characterization of two membrane proteins required for pullulanase secretion by Escherichia coli K-12.</title>
        <authorList>
            <person name="D'Enfert C."/>
            <person name="Reyss I."/>
            <person name="Wandersman C."/>
            <person name="Pugsley A.P."/>
        </authorList>
    </citation>
    <scope>NUCLEOTIDE SEQUENCE [GENOMIC DNA] OF 1-149</scope>
</reference>
<sequence length="497" mass="55130">MTPAAERRPLLPFGYARAHSVMLLSSGESCEVFCLAVTAPQALLEARRVAAMPFRLERLEEEAFEKLLVLSYQRDSAEARRMMADIGNELDLYTLAEELPDTDDLLDSEDDAPIIRLINAMLTEAIKEKASDIHIETYERHLQIRFRVDGVLREILRPQRRLAALLISRIKVMASLDIAEKRIPQDGRMALRIGGRAVDVRVSTLPSSYGERVVLRLLDKNSVNLDLLTLGMTPALLRQVDGLIARPHGIVLVTGPTGSGKSTTLYAALSRLDARERNIMTIEDPIEYELEGIGQTQVNAKVDMTFARGLRAILRQDPDVVLVGEIRDGETAQIAVQASLTGHLVLSTLHTNSALGAISRLQDMGVEPFLLSTSLLAVMSQRLVRRLCPHCRQQEPANADTAHQMEIAPGTALWQPRGCAECGFTGYRGRTGIHELLLVDDRVRMAIHRGENEVTLIQQLGTDYMTLRRAGREKALAGITSWQEVLRVTEQPIAEAC</sequence>
<evidence type="ECO:0000250" key="1">
    <source>
        <dbReference type="UniProtKB" id="P37093"/>
    </source>
</evidence>
<evidence type="ECO:0000250" key="2">
    <source>
        <dbReference type="UniProtKB" id="Q00512"/>
    </source>
</evidence>
<evidence type="ECO:0000255" key="3"/>
<evidence type="ECO:0000305" key="4"/>
<accession>P15645</accession>
<gene>
    <name type="primary">pulE</name>
</gene>